<reference key="1">
    <citation type="journal article" date="2007" name="Nature">
        <title>Evolution of genes and genomes on the Drosophila phylogeny.</title>
        <authorList>
            <consortium name="Drosophila 12 genomes consortium"/>
        </authorList>
    </citation>
    <scope>NUCLEOTIDE SEQUENCE [LARGE SCALE GENOMIC DNA]</scope>
    <source>
        <strain>Tucson 15010-1051.87</strain>
    </source>
</reference>
<dbReference type="EC" id="4.2.1.109" evidence="1"/>
<dbReference type="EMBL" id="CH940651">
    <property type="protein sequence ID" value="EDW65669.1"/>
    <property type="molecule type" value="Genomic_DNA"/>
</dbReference>
<dbReference type="SMR" id="B4M1W5"/>
<dbReference type="FunCoup" id="B4M1W5">
    <property type="interactions" value="925"/>
</dbReference>
<dbReference type="STRING" id="7244.B4M1W5"/>
<dbReference type="EnsemblMetazoa" id="FBtr0235312">
    <property type="protein sequence ID" value="FBpp0233804"/>
    <property type="gene ID" value="FBgn0206530"/>
</dbReference>
<dbReference type="EnsemblMetazoa" id="XM_002055432.3">
    <property type="protein sequence ID" value="XP_002055468.1"/>
    <property type="gene ID" value="LOC6631826"/>
</dbReference>
<dbReference type="GeneID" id="6631826"/>
<dbReference type="KEGG" id="dvi:6631826"/>
<dbReference type="eggNOG" id="KOG2631">
    <property type="taxonomic scope" value="Eukaryota"/>
</dbReference>
<dbReference type="HOGENOM" id="CLU_006033_4_0_1"/>
<dbReference type="InParanoid" id="B4M1W5"/>
<dbReference type="OMA" id="WFPGTSG"/>
<dbReference type="OrthoDB" id="191080at2759"/>
<dbReference type="PhylomeDB" id="B4M1W5"/>
<dbReference type="UniPathway" id="UPA00904">
    <property type="reaction ID" value="UER00875"/>
</dbReference>
<dbReference type="Proteomes" id="UP000008792">
    <property type="component" value="Unassembled WGS sequence"/>
</dbReference>
<dbReference type="GO" id="GO:0005737">
    <property type="term" value="C:cytoplasm"/>
    <property type="evidence" value="ECO:0007669"/>
    <property type="project" value="UniProtKB-SubCell"/>
</dbReference>
<dbReference type="GO" id="GO:0046570">
    <property type="term" value="F:methylthioribulose 1-phosphate dehydratase activity"/>
    <property type="evidence" value="ECO:0000250"/>
    <property type="project" value="UniProtKB"/>
</dbReference>
<dbReference type="GO" id="GO:0008270">
    <property type="term" value="F:zinc ion binding"/>
    <property type="evidence" value="ECO:0000250"/>
    <property type="project" value="UniProtKB"/>
</dbReference>
<dbReference type="GO" id="GO:0019509">
    <property type="term" value="P:L-methionine salvage from methylthioadenosine"/>
    <property type="evidence" value="ECO:0007669"/>
    <property type="project" value="UniProtKB-UniRule"/>
</dbReference>
<dbReference type="FunFam" id="3.40.225.10:FF:000003">
    <property type="entry name" value="Methylthioribulose-1-phosphate dehydratase"/>
    <property type="match status" value="1"/>
</dbReference>
<dbReference type="Gene3D" id="3.40.225.10">
    <property type="entry name" value="Class II aldolase/adducin N-terminal domain"/>
    <property type="match status" value="1"/>
</dbReference>
<dbReference type="HAMAP" id="MF_03116">
    <property type="entry name" value="Salvage_MtnB_euk"/>
    <property type="match status" value="1"/>
</dbReference>
<dbReference type="InterPro" id="IPR001303">
    <property type="entry name" value="Aldolase_II/adducin_N"/>
</dbReference>
<dbReference type="InterPro" id="IPR036409">
    <property type="entry name" value="Aldolase_II/adducin_N_sf"/>
</dbReference>
<dbReference type="InterPro" id="IPR017714">
    <property type="entry name" value="MethylthioRu-1-P_deHdtase_MtnB"/>
</dbReference>
<dbReference type="InterPro" id="IPR027514">
    <property type="entry name" value="Salvage_MtnB_euk"/>
</dbReference>
<dbReference type="NCBIfam" id="TIGR03328">
    <property type="entry name" value="salvage_mtnB"/>
    <property type="match status" value="1"/>
</dbReference>
<dbReference type="PANTHER" id="PTHR10640">
    <property type="entry name" value="METHYLTHIORIBULOSE-1-PHOSPHATE DEHYDRATASE"/>
    <property type="match status" value="1"/>
</dbReference>
<dbReference type="PANTHER" id="PTHR10640:SF7">
    <property type="entry name" value="METHYLTHIORIBULOSE-1-PHOSPHATE DEHYDRATASE"/>
    <property type="match status" value="1"/>
</dbReference>
<dbReference type="Pfam" id="PF00596">
    <property type="entry name" value="Aldolase_II"/>
    <property type="match status" value="1"/>
</dbReference>
<dbReference type="SMART" id="SM01007">
    <property type="entry name" value="Aldolase_II"/>
    <property type="match status" value="1"/>
</dbReference>
<dbReference type="SUPFAM" id="SSF53639">
    <property type="entry name" value="AraD/HMP-PK domain-like"/>
    <property type="match status" value="1"/>
</dbReference>
<proteinExistence type="inferred from homology"/>
<evidence type="ECO:0000255" key="1">
    <source>
        <dbReference type="HAMAP-Rule" id="MF_03116"/>
    </source>
</evidence>
<protein>
    <recommendedName>
        <fullName evidence="1">Probable methylthioribulose-1-phosphate dehydratase</fullName>
        <shortName evidence="1">MTRu-1-P dehydratase</shortName>
        <ecNumber evidence="1">4.2.1.109</ecNumber>
    </recommendedName>
</protein>
<name>MTNB_DROVI</name>
<organism>
    <name type="scientific">Drosophila virilis</name>
    <name type="common">Fruit fly</name>
    <dbReference type="NCBI Taxonomy" id="7244"/>
    <lineage>
        <taxon>Eukaryota</taxon>
        <taxon>Metazoa</taxon>
        <taxon>Ecdysozoa</taxon>
        <taxon>Arthropoda</taxon>
        <taxon>Hexapoda</taxon>
        <taxon>Insecta</taxon>
        <taxon>Pterygota</taxon>
        <taxon>Neoptera</taxon>
        <taxon>Endopterygota</taxon>
        <taxon>Diptera</taxon>
        <taxon>Brachycera</taxon>
        <taxon>Muscomorpha</taxon>
        <taxon>Ephydroidea</taxon>
        <taxon>Drosophilidae</taxon>
        <taxon>Drosophila</taxon>
    </lineage>
</organism>
<comment type="function">
    <text evidence="1">Catalyzes the dehydration of methylthioribulose-1-phosphate (MTRu-1-P) into 2,3-diketo-5-methylthiopentyl-1-phosphate (DK-MTP-1-P).</text>
</comment>
<comment type="catalytic activity">
    <reaction evidence="1">
        <text>5-(methylsulfanyl)-D-ribulose 1-phosphate = 5-methylsulfanyl-2,3-dioxopentyl phosphate + H2O</text>
        <dbReference type="Rhea" id="RHEA:15549"/>
        <dbReference type="ChEBI" id="CHEBI:15377"/>
        <dbReference type="ChEBI" id="CHEBI:58548"/>
        <dbReference type="ChEBI" id="CHEBI:58828"/>
        <dbReference type="EC" id="4.2.1.109"/>
    </reaction>
</comment>
<comment type="cofactor">
    <cofactor evidence="1">
        <name>Zn(2+)</name>
        <dbReference type="ChEBI" id="CHEBI:29105"/>
    </cofactor>
    <text evidence="1">Binds 1 zinc ion per subunit.</text>
</comment>
<comment type="pathway">
    <text evidence="1">Amino-acid biosynthesis; L-methionine biosynthesis via salvage pathway; L-methionine from S-methyl-5-thio-alpha-D-ribose 1-phosphate: step 2/6.</text>
</comment>
<comment type="subcellular location">
    <subcellularLocation>
        <location evidence="1">Cytoplasm</location>
    </subcellularLocation>
</comment>
<comment type="similarity">
    <text evidence="1">Belongs to the aldolase class II family. MtnB subfamily.</text>
</comment>
<accession>B4M1W5</accession>
<gene>
    <name type="ORF">GJ19387</name>
</gene>
<keyword id="KW-0028">Amino-acid biosynthesis</keyword>
<keyword id="KW-0963">Cytoplasm</keyword>
<keyword id="KW-0456">Lyase</keyword>
<keyword id="KW-0479">Metal-binding</keyword>
<keyword id="KW-0486">Methionine biosynthesis</keyword>
<keyword id="KW-1185">Reference proteome</keyword>
<keyword id="KW-0862">Zinc</keyword>
<sequence length="230" mass="26284">MALSIFKDLPGEHPRNLIPSLCRQFYHLGWVTGTGGGMSIKYNNEIYIAPSGVQKERMQPEDLFVQDIDGKDLQLPPEIKGLSKSQCTPLFMLAYRHRNAGAVIHTHSQHAVMATLLWPGKTFRCTHLEMIKGVYDEADKRYLRYDEQLVVPIIENTPFERDLADSMYAAMMEYPGCSAVLVRRHGVYVWGQTWEKTKTMSECYDYLFSIAVQMKQAGLDPEKFENALQA</sequence>
<feature type="chain" id="PRO_0000393789" description="Probable methylthioribulose-1-phosphate dehydratase">
    <location>
        <begin position="1"/>
        <end position="230"/>
    </location>
</feature>
<feature type="active site" description="Proton donor/acceptor" evidence="1">
    <location>
        <position position="129"/>
    </location>
</feature>
<feature type="binding site" evidence="1">
    <location>
        <position position="87"/>
    </location>
    <ligand>
        <name>substrate</name>
    </ligand>
</feature>
<feature type="binding site" evidence="1">
    <location>
        <position position="105"/>
    </location>
    <ligand>
        <name>Zn(2+)</name>
        <dbReference type="ChEBI" id="CHEBI:29105"/>
    </ligand>
</feature>
<feature type="binding site" evidence="1">
    <location>
        <position position="107"/>
    </location>
    <ligand>
        <name>Zn(2+)</name>
        <dbReference type="ChEBI" id="CHEBI:29105"/>
    </ligand>
</feature>
<feature type="binding site" evidence="1">
    <location>
        <position position="185"/>
    </location>
    <ligand>
        <name>Zn(2+)</name>
        <dbReference type="ChEBI" id="CHEBI:29105"/>
    </ligand>
</feature>